<sequence length="67" mass="8030">MGNIKQGFIKRTARELFDRYPNEFTRDFEHNKKKVEELTNITSKTMRNRIAGYVTRLVRLKEEGKIL</sequence>
<organism>
    <name type="scientific">Thermococcus sibiricus (strain DSM 12597 / MM 739)</name>
    <dbReference type="NCBI Taxonomy" id="604354"/>
    <lineage>
        <taxon>Archaea</taxon>
        <taxon>Methanobacteriati</taxon>
        <taxon>Methanobacteriota</taxon>
        <taxon>Thermococci</taxon>
        <taxon>Thermococcales</taxon>
        <taxon>Thermococcaceae</taxon>
        <taxon>Thermococcus</taxon>
    </lineage>
</organism>
<accession>C6A4W3</accession>
<evidence type="ECO:0000255" key="1">
    <source>
        <dbReference type="HAMAP-Rule" id="MF_00511"/>
    </source>
</evidence>
<evidence type="ECO:0000305" key="2"/>
<keyword id="KW-1185">Reference proteome</keyword>
<keyword id="KW-0687">Ribonucleoprotein</keyword>
<keyword id="KW-0689">Ribosomal protein</keyword>
<proteinExistence type="inferred from homology"/>
<feature type="chain" id="PRO_1000206621" description="Small ribosomal subunit protein eS17">
    <location>
        <begin position="1"/>
        <end position="67"/>
    </location>
</feature>
<name>RS17E_THESM</name>
<reference key="1">
    <citation type="journal article" date="2009" name="Appl. Environ. Microbiol.">
        <title>Metabolic versatility and indigenous origin of the archaeon Thermococcus sibiricus, isolated from a siberian oil reservoir, as revealed by genome analysis.</title>
        <authorList>
            <person name="Mardanov A.V."/>
            <person name="Ravin N.V."/>
            <person name="Svetlitchnyi V.A."/>
            <person name="Beletsky A.V."/>
            <person name="Miroshnichenko M.L."/>
            <person name="Bonch-Osmolovskaya E.A."/>
            <person name="Skryabin K.G."/>
        </authorList>
    </citation>
    <scope>NUCLEOTIDE SEQUENCE [LARGE SCALE GENOMIC DNA]</scope>
    <source>
        <strain>DSM 12597 / MM 739</strain>
    </source>
</reference>
<gene>
    <name evidence="1" type="primary">rps17e</name>
    <name type="ordered locus">TSIB_1607</name>
</gene>
<protein>
    <recommendedName>
        <fullName evidence="1">Small ribosomal subunit protein eS17</fullName>
    </recommendedName>
    <alternativeName>
        <fullName evidence="2">30S ribosomal protein S17e</fullName>
    </alternativeName>
</protein>
<dbReference type="EMBL" id="CP001463">
    <property type="protein sequence ID" value="ACS90658.1"/>
    <property type="molecule type" value="Genomic_DNA"/>
</dbReference>
<dbReference type="RefSeq" id="WP_015849874.1">
    <property type="nucleotide sequence ID" value="NC_012883.1"/>
</dbReference>
<dbReference type="SMR" id="C6A4W3"/>
<dbReference type="STRING" id="604354.TSIB_1607"/>
<dbReference type="GeneID" id="8096617"/>
<dbReference type="KEGG" id="tsi:TSIB_1607"/>
<dbReference type="eggNOG" id="arCOG01885">
    <property type="taxonomic scope" value="Archaea"/>
</dbReference>
<dbReference type="HOGENOM" id="CLU_176720_1_0_2"/>
<dbReference type="OrthoDB" id="52479at2157"/>
<dbReference type="Proteomes" id="UP000009079">
    <property type="component" value="Chromosome"/>
</dbReference>
<dbReference type="GO" id="GO:0005829">
    <property type="term" value="C:cytosol"/>
    <property type="evidence" value="ECO:0007669"/>
    <property type="project" value="UniProtKB-ARBA"/>
</dbReference>
<dbReference type="GO" id="GO:1990904">
    <property type="term" value="C:ribonucleoprotein complex"/>
    <property type="evidence" value="ECO:0007669"/>
    <property type="project" value="UniProtKB-KW"/>
</dbReference>
<dbReference type="GO" id="GO:0005840">
    <property type="term" value="C:ribosome"/>
    <property type="evidence" value="ECO:0007669"/>
    <property type="project" value="UniProtKB-KW"/>
</dbReference>
<dbReference type="GO" id="GO:0003735">
    <property type="term" value="F:structural constituent of ribosome"/>
    <property type="evidence" value="ECO:0007669"/>
    <property type="project" value="InterPro"/>
</dbReference>
<dbReference type="GO" id="GO:0006412">
    <property type="term" value="P:translation"/>
    <property type="evidence" value="ECO:0007669"/>
    <property type="project" value="UniProtKB-UniRule"/>
</dbReference>
<dbReference type="Gene3D" id="1.10.60.20">
    <property type="entry name" value="Ribosomal protein S17e-like"/>
    <property type="match status" value="1"/>
</dbReference>
<dbReference type="HAMAP" id="MF_00511">
    <property type="entry name" value="Ribosomal_eS17"/>
    <property type="match status" value="1"/>
</dbReference>
<dbReference type="InterPro" id="IPR001210">
    <property type="entry name" value="Ribosomal_eS17"/>
</dbReference>
<dbReference type="InterPro" id="IPR018273">
    <property type="entry name" value="Ribosomal_eS17_CS"/>
</dbReference>
<dbReference type="InterPro" id="IPR036401">
    <property type="entry name" value="Ribosomal_eS17_sf"/>
</dbReference>
<dbReference type="NCBIfam" id="NF002242">
    <property type="entry name" value="PRK01151.1"/>
    <property type="match status" value="1"/>
</dbReference>
<dbReference type="PANTHER" id="PTHR10732">
    <property type="entry name" value="40S RIBOSOMAL PROTEIN S17"/>
    <property type="match status" value="1"/>
</dbReference>
<dbReference type="PANTHER" id="PTHR10732:SF0">
    <property type="entry name" value="40S RIBOSOMAL PROTEIN S17"/>
    <property type="match status" value="1"/>
</dbReference>
<dbReference type="Pfam" id="PF00833">
    <property type="entry name" value="Ribosomal_S17e"/>
    <property type="match status" value="1"/>
</dbReference>
<dbReference type="SUPFAM" id="SSF116820">
    <property type="entry name" value="Rps17e-like"/>
    <property type="match status" value="1"/>
</dbReference>
<dbReference type="PROSITE" id="PS00712">
    <property type="entry name" value="RIBOSOMAL_S17E"/>
    <property type="match status" value="1"/>
</dbReference>
<comment type="similarity">
    <text evidence="1">Belongs to the eukaryotic ribosomal protein eS17 family.</text>
</comment>